<proteinExistence type="evidence at protein level"/>
<organism>
    <name type="scientific">Streptomyces avermitilis (strain ATCC 31267 / DSM 46492 / JCM 5070 / NBRC 14893 / NCIMB 12804 / NRRL 8165 / MA-4680)</name>
    <dbReference type="NCBI Taxonomy" id="227882"/>
    <lineage>
        <taxon>Bacteria</taxon>
        <taxon>Bacillati</taxon>
        <taxon>Actinomycetota</taxon>
        <taxon>Actinomycetes</taxon>
        <taxon>Kitasatosporales</taxon>
        <taxon>Streptomycetaceae</taxon>
        <taxon>Streptomyces</taxon>
    </lineage>
</organism>
<protein>
    <recommendedName>
        <fullName evidence="6">Exo-beta-D-glucosaminidase</fullName>
        <ecNumber>3.2.1.165</ecNumber>
    </recommendedName>
</protein>
<accession>Q82NR8</accession>
<feature type="signal peptide" evidence="2">
    <location>
        <begin position="1"/>
        <end position="32"/>
    </location>
</feature>
<feature type="chain" id="PRO_0000399047" description="Exo-beta-D-glucosaminidase" evidence="2">
    <location>
        <begin position="33"/>
        <end position="904"/>
    </location>
</feature>
<feature type="region of interest" description="Disordered" evidence="3">
    <location>
        <begin position="28"/>
        <end position="49"/>
    </location>
</feature>
<feature type="region of interest" description="Disordered" evidence="3">
    <location>
        <begin position="813"/>
        <end position="833"/>
    </location>
</feature>
<feature type="compositionally biased region" description="Low complexity" evidence="3">
    <location>
        <begin position="813"/>
        <end position="828"/>
    </location>
</feature>
<feature type="active site" description="Proton donor" evidence="1">
    <location>
        <position position="476"/>
    </location>
</feature>
<feature type="active site" description="Nucleophile" evidence="1">
    <location>
        <position position="545"/>
    </location>
</feature>
<sequence length="904" mass="97183">MFHRPASVRRFVTTAVALGLLSTLSTGARAGARTHEPPPRPTTVSSTAGSTTALTGYAIQSTAKVTDPAAAVSSPGYPASGWYPAGARSTVLAALLAGGKYADPFYSTNQQKIPKADFQVPWWYRSDFTVADTSARTYLDFSGVISAADVFVNGRQIARSADVAGAYTRHELDVTSLVREGANTVAFRIQPNNPNKNLTMGWIDWLEPPPDQNMGIVRDVLVRRGGPVALRDAHVITRLDVPSLATADLTVKARARNDSDAAITATVSGSVGATSFRRSVALAAHETKTVTFTPADTPGLHLTSPRVWWPAGMGGQPLYALDLSASVSETVSDTVHESFGIRDVKAPLNSDGARQYSVNGRRLLIKGGGWSPDEFLRWDSTYVEDRLRYALDLGLNTIRLEGHIEPDEFFDLADRYGILTLPGWECCNKWEGNVNGSGSGDEWTAADYPVAKASMAAEAARLRDHPSVVSFLIGSDFAPDAKIEKTYLDALKAADWPTPVVAAASDKSSPVSGSSGMKMTGPYDWIPPNYWYAKREGGATGFNSETSAGPDIPTLDTLRRMMTPAELDTLWKNPGAKQYHRSPSSVFGTLKIYDAALAGRYGAPTGLTDYVRKAQLAQYENVRAQFEAYGRGATDASKPATGVIYWMFNSGWTSLHWQLLDRYLDQGGAYFGAKKANEPLHVQYSYDDRSVVVVNNRPAAVSGLTARVTLFNTDGTQKYDKSATGLSVAGDGAHSTALTLPSSVSGLSTTYLARLVLTDSAGKEVSRNVYWLSTRPDTLDWAHTDWYYTPTTSYADLKGLGSMARVPVSATASTTAGTDGASTTTVTVRNTGSGRTPSLFTDVHLVDSKGKPVLPVQWSDNEVSLWPGESATLTVTYRTADLHGSAPRVRVSGWNTAEQTVPAA</sequence>
<keyword id="KW-0119">Carbohydrate metabolism</keyword>
<keyword id="KW-0146">Chitin degradation</keyword>
<keyword id="KW-0326">Glycosidase</keyword>
<keyword id="KW-0378">Hydrolase</keyword>
<keyword id="KW-0624">Polysaccharide degradation</keyword>
<keyword id="KW-1185">Reference proteome</keyword>
<keyword id="KW-0964">Secreted</keyword>
<keyword id="KW-0732">Signal</keyword>
<name>EBDG_STRAW</name>
<comment type="function">
    <text evidence="1 4">Hydrolyzes chitosan and chitooligosaccharides with retention of anomeric configuration. Has no beta-mannosidase activity.</text>
</comment>
<comment type="catalytic activity">
    <reaction evidence="4">
        <text>Hydrolysis of chitosan or chitosan oligosaccharides to remove successive D-glucosamine residues from the non-reducing termini.</text>
        <dbReference type="EC" id="3.2.1.165"/>
    </reaction>
</comment>
<comment type="biophysicochemical properties">
    <phDependence>
        <text evidence="4">Optimum pH is 5.3.</text>
    </phDependence>
</comment>
<comment type="subunit">
    <text evidence="1">Monomer.</text>
</comment>
<comment type="subcellular location">
    <subcellularLocation>
        <location evidence="1">Secreted</location>
    </subcellularLocation>
</comment>
<comment type="similarity">
    <text evidence="2">Belongs to the glycosyl hydrolase 2 family.</text>
</comment>
<reference evidence="6" key="1">
    <citation type="journal article" date="2001" name="Proc. Natl. Acad. Sci. U.S.A.">
        <title>Genome sequence of an industrial microorganism Streptomyces avermitilis: deducing the ability of producing secondary metabolites.</title>
        <authorList>
            <person name="Omura S."/>
            <person name="Ikeda H."/>
            <person name="Ishikawa J."/>
            <person name="Hanamoto A."/>
            <person name="Takahashi C."/>
            <person name="Shinose M."/>
            <person name="Takahashi Y."/>
            <person name="Horikawa H."/>
            <person name="Nakazawa H."/>
            <person name="Osonoe T."/>
            <person name="Kikuchi H."/>
            <person name="Shiba T."/>
            <person name="Sakaki Y."/>
            <person name="Hattori M."/>
        </authorList>
    </citation>
    <scope>NUCLEOTIDE SEQUENCE [LARGE SCALE GENOMIC DNA]</scope>
    <source>
        <strain>ATCC 31267 / DSM 46492 / JCM 5070 / NBRC 14893 / NCIMB 12804 / NRRL 8165 / MA-4680</strain>
    </source>
</reference>
<reference key="2">
    <citation type="journal article" date="2003" name="Nat. Biotechnol.">
        <title>Complete genome sequence and comparative analysis of the industrial microorganism Streptomyces avermitilis.</title>
        <authorList>
            <person name="Ikeda H."/>
            <person name="Ishikawa J."/>
            <person name="Hanamoto A."/>
            <person name="Shinose M."/>
            <person name="Kikuchi H."/>
            <person name="Shiba T."/>
            <person name="Sakaki Y."/>
            <person name="Hattori M."/>
            <person name="Omura S."/>
        </authorList>
    </citation>
    <scope>NUCLEOTIDE SEQUENCE [LARGE SCALE GENOMIC DNA]</scope>
    <source>
        <strain>ATCC 31267 / DSM 46492 / JCM 5070 / NBRC 14893 / NCIMB 12804 / NRRL 8165 / MA-4680</strain>
    </source>
</reference>
<reference evidence="5" key="3">
    <citation type="journal article" date="2006" name="Biochem. J.">
        <title>Two exo-beta-D-glucosaminidases/exochitosanases from actinomycetes define a new subfamily within family 2 of glycoside hydrolases.</title>
        <authorList>
            <person name="Cote N."/>
            <person name="Fleury A."/>
            <person name="Dumont-Blanchette E."/>
            <person name="Fukamizo T."/>
            <person name="Mitsutomi M."/>
            <person name="Brzezinski R."/>
        </authorList>
    </citation>
    <scope>FUNCTION</scope>
    <scope>CATALYTIC ACTIVITY</scope>
    <scope>BIOPHYSICOCHEMICAL PROPERTIES</scope>
</reference>
<evidence type="ECO:0000250" key="1">
    <source>
        <dbReference type="UniProtKB" id="Q56F26"/>
    </source>
</evidence>
<evidence type="ECO:0000255" key="2"/>
<evidence type="ECO:0000256" key="3">
    <source>
        <dbReference type="SAM" id="MobiDB-lite"/>
    </source>
</evidence>
<evidence type="ECO:0000269" key="4">
    <source>
    </source>
</evidence>
<evidence type="ECO:0000305" key="5"/>
<evidence type="ECO:0000312" key="6">
    <source>
        <dbReference type="EMBL" id="BAC68933.1"/>
    </source>
</evidence>
<dbReference type="EC" id="3.2.1.165"/>
<dbReference type="EMBL" id="BA000030">
    <property type="protein sequence ID" value="BAC68933.1"/>
    <property type="molecule type" value="Genomic_DNA"/>
</dbReference>
<dbReference type="RefSeq" id="WP_010982661.1">
    <property type="nucleotide sequence ID" value="NZ_JZJK01000078.1"/>
</dbReference>
<dbReference type="SMR" id="Q82NR8"/>
<dbReference type="CAZy" id="GH2">
    <property type="family name" value="Glycoside Hydrolase Family 2"/>
</dbReference>
<dbReference type="GeneID" id="41538325"/>
<dbReference type="KEGG" id="sma:SAVERM_1223"/>
<dbReference type="eggNOG" id="COG3250">
    <property type="taxonomic scope" value="Bacteria"/>
</dbReference>
<dbReference type="HOGENOM" id="CLU_005015_2_4_11"/>
<dbReference type="OrthoDB" id="9758603at2"/>
<dbReference type="Proteomes" id="UP000000428">
    <property type="component" value="Chromosome"/>
</dbReference>
<dbReference type="GO" id="GO:0005576">
    <property type="term" value="C:extracellular region"/>
    <property type="evidence" value="ECO:0000250"/>
    <property type="project" value="UniProtKB"/>
</dbReference>
<dbReference type="GO" id="GO:0052761">
    <property type="term" value="F:exo-1,4-beta-D-glucosaminidase activity"/>
    <property type="evidence" value="ECO:0007669"/>
    <property type="project" value="UniProtKB-EC"/>
</dbReference>
<dbReference type="GO" id="GO:0004553">
    <property type="term" value="F:hydrolase activity, hydrolyzing O-glycosyl compounds"/>
    <property type="evidence" value="ECO:0000314"/>
    <property type="project" value="UniProtKB"/>
</dbReference>
<dbReference type="GO" id="GO:0006032">
    <property type="term" value="P:chitin catabolic process"/>
    <property type="evidence" value="ECO:0007669"/>
    <property type="project" value="UniProtKB-KW"/>
</dbReference>
<dbReference type="GO" id="GO:0000272">
    <property type="term" value="P:polysaccharide catabolic process"/>
    <property type="evidence" value="ECO:0000314"/>
    <property type="project" value="UniProtKB"/>
</dbReference>
<dbReference type="FunFam" id="2.60.120.260:FF:000182">
    <property type="entry name" value="Exo-beta-D-glucosaminidase"/>
    <property type="match status" value="1"/>
</dbReference>
<dbReference type="FunFam" id="2.60.40.10:FF:001725">
    <property type="entry name" value="Exo-beta-D-glucosaminidase"/>
    <property type="match status" value="1"/>
</dbReference>
<dbReference type="FunFam" id="2.60.40.10:FF:002523">
    <property type="entry name" value="Exo-beta-D-glucosaminidase"/>
    <property type="match status" value="1"/>
</dbReference>
<dbReference type="FunFam" id="3.20.20.80:FF:000166">
    <property type="entry name" value="Exo-beta-D-glucosaminidase"/>
    <property type="match status" value="1"/>
</dbReference>
<dbReference type="Gene3D" id="2.60.120.260">
    <property type="entry name" value="Galactose-binding domain-like"/>
    <property type="match status" value="1"/>
</dbReference>
<dbReference type="Gene3D" id="3.20.20.80">
    <property type="entry name" value="Glycosidases"/>
    <property type="match status" value="1"/>
</dbReference>
<dbReference type="Gene3D" id="2.60.40.10">
    <property type="entry name" value="Immunoglobulins"/>
    <property type="match status" value="3"/>
</dbReference>
<dbReference type="InterPro" id="IPR036156">
    <property type="entry name" value="Beta-gal/glucu_dom_sf"/>
</dbReference>
<dbReference type="InterPro" id="IPR054593">
    <property type="entry name" value="Beta-mannosidase-like_N2"/>
</dbReference>
<dbReference type="InterPro" id="IPR043534">
    <property type="entry name" value="EBDG/EBM"/>
</dbReference>
<dbReference type="InterPro" id="IPR008979">
    <property type="entry name" value="Galactose-bd-like_sf"/>
</dbReference>
<dbReference type="InterPro" id="IPR006102">
    <property type="entry name" value="Glyco_hydro_2_Ig-like"/>
</dbReference>
<dbReference type="InterPro" id="IPR017853">
    <property type="entry name" value="Glycoside_hydrolase_SF"/>
</dbReference>
<dbReference type="InterPro" id="IPR013783">
    <property type="entry name" value="Ig-like_fold"/>
</dbReference>
<dbReference type="InterPro" id="IPR041351">
    <property type="entry name" value="Ig_GlcNase"/>
</dbReference>
<dbReference type="PANTHER" id="PTHR43536">
    <property type="entry name" value="MANNOSYLGLYCOPROTEIN ENDO-BETA-MANNOSIDASE"/>
    <property type="match status" value="1"/>
</dbReference>
<dbReference type="PANTHER" id="PTHR43536:SF1">
    <property type="entry name" value="MANNOSYLGLYCOPROTEIN ENDO-BETA-MANNOSIDASE"/>
    <property type="match status" value="1"/>
</dbReference>
<dbReference type="Pfam" id="PF00703">
    <property type="entry name" value="Glyco_hydro_2"/>
    <property type="match status" value="1"/>
</dbReference>
<dbReference type="Pfam" id="PF22666">
    <property type="entry name" value="Glyco_hydro_2_N2"/>
    <property type="match status" value="1"/>
</dbReference>
<dbReference type="Pfam" id="PF18368">
    <property type="entry name" value="Ig_GlcNase"/>
    <property type="match status" value="1"/>
</dbReference>
<dbReference type="SUPFAM" id="SSF51445">
    <property type="entry name" value="(Trans)glycosidases"/>
    <property type="match status" value="1"/>
</dbReference>
<dbReference type="SUPFAM" id="SSF49303">
    <property type="entry name" value="beta-Galactosidase/glucuronidase domain"/>
    <property type="match status" value="3"/>
</dbReference>
<dbReference type="SUPFAM" id="SSF49785">
    <property type="entry name" value="Galactose-binding domain-like"/>
    <property type="match status" value="1"/>
</dbReference>
<gene>
    <name evidence="6" type="primary">csxA</name>
    <name type="ordered locus">SAV_1223</name>
</gene>